<sequence length="144" mass="16172">MLMPKRVKYRREHRGKMRGRAKGGTEIAFGEFGLQAQAASWITNRQIEAARRAMTRYMKRGGKVWIKIFPSKPYTAKPLEVRMGSGKGAPEGWVAVVKPGKIMFEIAGVSEEVAREALRLAAHKLPVKCKFVKREENGGESNEN</sequence>
<dbReference type="EMBL" id="CP001215">
    <property type="protein sequence ID" value="ACP14986.1"/>
    <property type="molecule type" value="Genomic_DNA"/>
</dbReference>
<dbReference type="RefSeq" id="WP_000928969.1">
    <property type="nucleotide sequence ID" value="NC_012581.1"/>
</dbReference>
<dbReference type="SMR" id="C3LJ89"/>
<dbReference type="GeneID" id="93010936"/>
<dbReference type="KEGG" id="bah:BAMEG_0133"/>
<dbReference type="HOGENOM" id="CLU_078858_2_1_9"/>
<dbReference type="GO" id="GO:0022625">
    <property type="term" value="C:cytosolic large ribosomal subunit"/>
    <property type="evidence" value="ECO:0007669"/>
    <property type="project" value="TreeGrafter"/>
</dbReference>
<dbReference type="GO" id="GO:0019843">
    <property type="term" value="F:rRNA binding"/>
    <property type="evidence" value="ECO:0007669"/>
    <property type="project" value="UniProtKB-UniRule"/>
</dbReference>
<dbReference type="GO" id="GO:0003735">
    <property type="term" value="F:structural constituent of ribosome"/>
    <property type="evidence" value="ECO:0007669"/>
    <property type="project" value="InterPro"/>
</dbReference>
<dbReference type="GO" id="GO:0000049">
    <property type="term" value="F:tRNA binding"/>
    <property type="evidence" value="ECO:0007669"/>
    <property type="project" value="UniProtKB-KW"/>
</dbReference>
<dbReference type="GO" id="GO:0006412">
    <property type="term" value="P:translation"/>
    <property type="evidence" value="ECO:0007669"/>
    <property type="project" value="UniProtKB-UniRule"/>
</dbReference>
<dbReference type="CDD" id="cd01433">
    <property type="entry name" value="Ribosomal_L16_L10e"/>
    <property type="match status" value="1"/>
</dbReference>
<dbReference type="FunFam" id="3.90.1170.10:FF:000001">
    <property type="entry name" value="50S ribosomal protein L16"/>
    <property type="match status" value="1"/>
</dbReference>
<dbReference type="Gene3D" id="3.90.1170.10">
    <property type="entry name" value="Ribosomal protein L10e/L16"/>
    <property type="match status" value="1"/>
</dbReference>
<dbReference type="HAMAP" id="MF_01342">
    <property type="entry name" value="Ribosomal_uL16"/>
    <property type="match status" value="1"/>
</dbReference>
<dbReference type="InterPro" id="IPR047873">
    <property type="entry name" value="Ribosomal_uL16"/>
</dbReference>
<dbReference type="InterPro" id="IPR000114">
    <property type="entry name" value="Ribosomal_uL16_bact-type"/>
</dbReference>
<dbReference type="InterPro" id="IPR020798">
    <property type="entry name" value="Ribosomal_uL16_CS"/>
</dbReference>
<dbReference type="InterPro" id="IPR016180">
    <property type="entry name" value="Ribosomal_uL16_dom"/>
</dbReference>
<dbReference type="InterPro" id="IPR036920">
    <property type="entry name" value="Ribosomal_uL16_sf"/>
</dbReference>
<dbReference type="NCBIfam" id="TIGR01164">
    <property type="entry name" value="rplP_bact"/>
    <property type="match status" value="1"/>
</dbReference>
<dbReference type="PANTHER" id="PTHR12220">
    <property type="entry name" value="50S/60S RIBOSOMAL PROTEIN L16"/>
    <property type="match status" value="1"/>
</dbReference>
<dbReference type="PANTHER" id="PTHR12220:SF13">
    <property type="entry name" value="LARGE RIBOSOMAL SUBUNIT PROTEIN UL16M"/>
    <property type="match status" value="1"/>
</dbReference>
<dbReference type="Pfam" id="PF00252">
    <property type="entry name" value="Ribosomal_L16"/>
    <property type="match status" value="1"/>
</dbReference>
<dbReference type="PRINTS" id="PR00060">
    <property type="entry name" value="RIBOSOMALL16"/>
</dbReference>
<dbReference type="SUPFAM" id="SSF54686">
    <property type="entry name" value="Ribosomal protein L16p/L10e"/>
    <property type="match status" value="1"/>
</dbReference>
<dbReference type="PROSITE" id="PS00586">
    <property type="entry name" value="RIBOSOMAL_L16_1"/>
    <property type="match status" value="1"/>
</dbReference>
<dbReference type="PROSITE" id="PS00701">
    <property type="entry name" value="RIBOSOMAL_L16_2"/>
    <property type="match status" value="1"/>
</dbReference>
<evidence type="ECO:0000255" key="1">
    <source>
        <dbReference type="HAMAP-Rule" id="MF_01342"/>
    </source>
</evidence>
<evidence type="ECO:0000305" key="2"/>
<comment type="function">
    <text evidence="1">Binds 23S rRNA and is also seen to make contacts with the A and possibly P site tRNAs.</text>
</comment>
<comment type="subunit">
    <text evidence="1">Part of the 50S ribosomal subunit.</text>
</comment>
<comment type="similarity">
    <text evidence="1">Belongs to the universal ribosomal protein uL16 family.</text>
</comment>
<proteinExistence type="inferred from homology"/>
<keyword id="KW-0687">Ribonucleoprotein</keyword>
<keyword id="KW-0689">Ribosomal protein</keyword>
<keyword id="KW-0694">RNA-binding</keyword>
<keyword id="KW-0699">rRNA-binding</keyword>
<keyword id="KW-0820">tRNA-binding</keyword>
<accession>C3LJ89</accession>
<organism>
    <name type="scientific">Bacillus anthracis (strain CDC 684 / NRRL 3495)</name>
    <dbReference type="NCBI Taxonomy" id="568206"/>
    <lineage>
        <taxon>Bacteria</taxon>
        <taxon>Bacillati</taxon>
        <taxon>Bacillota</taxon>
        <taxon>Bacilli</taxon>
        <taxon>Bacillales</taxon>
        <taxon>Bacillaceae</taxon>
        <taxon>Bacillus</taxon>
        <taxon>Bacillus cereus group</taxon>
    </lineage>
</organism>
<gene>
    <name evidence="1" type="primary">rplP</name>
    <name type="ordered locus">BAMEG_0133</name>
</gene>
<name>RL16_BACAC</name>
<feature type="chain" id="PRO_1000166334" description="Large ribosomal subunit protein uL16">
    <location>
        <begin position="1"/>
        <end position="144"/>
    </location>
</feature>
<reference key="1">
    <citation type="submission" date="2008-10" db="EMBL/GenBank/DDBJ databases">
        <title>Genome sequence of Bacillus anthracis str. CDC 684.</title>
        <authorList>
            <person name="Dodson R.J."/>
            <person name="Munk A.C."/>
            <person name="Brettin T."/>
            <person name="Bruce D."/>
            <person name="Detter C."/>
            <person name="Tapia R."/>
            <person name="Han C."/>
            <person name="Sutton G."/>
            <person name="Sims D."/>
        </authorList>
    </citation>
    <scope>NUCLEOTIDE SEQUENCE [LARGE SCALE GENOMIC DNA]</scope>
    <source>
        <strain>CDC 684 / NRRL 3495</strain>
    </source>
</reference>
<protein>
    <recommendedName>
        <fullName evidence="1">Large ribosomal subunit protein uL16</fullName>
    </recommendedName>
    <alternativeName>
        <fullName evidence="2">50S ribosomal protein L16</fullName>
    </alternativeName>
</protein>